<accession>P03817</accession>
<accession>Q2M860</accession>
<keyword id="KW-0002">3D-structure</keyword>
<keyword id="KW-0903">Direct protein sequencing</keyword>
<keyword id="KW-0249">Electron transport</keyword>
<keyword id="KW-0285">Flavoprotein</keyword>
<keyword id="KW-0288">FMN</keyword>
<keyword id="KW-1185">Reference proteome</keyword>
<keyword id="KW-0813">Transport</keyword>
<organism>
    <name type="scientific">Escherichia coli (strain K12)</name>
    <dbReference type="NCBI Taxonomy" id="83333"/>
    <lineage>
        <taxon>Bacteria</taxon>
        <taxon>Pseudomonadati</taxon>
        <taxon>Pseudomonadota</taxon>
        <taxon>Gammaproteobacteria</taxon>
        <taxon>Enterobacterales</taxon>
        <taxon>Enterobacteriaceae</taxon>
        <taxon>Escherichia</taxon>
    </lineage>
</organism>
<gene>
    <name type="primary">mioC</name>
    <name type="synonym">yieB</name>
    <name type="ordered locus">b3742</name>
    <name type="ordered locus">JW3720</name>
</gene>
<comment type="function">
    <text>Probable electron transporter required for biotin synthase activity.</text>
</comment>
<comment type="cofactor">
    <cofactor>
        <name>FMN</name>
        <dbReference type="ChEBI" id="CHEBI:58210"/>
    </cofactor>
</comment>
<comment type="subunit">
    <text evidence="4">Homodimer.</text>
</comment>
<comment type="similarity">
    <text evidence="4">Belongs to the flavodoxin family. MioC subfamily.</text>
</comment>
<name>MIOC_ECOLI</name>
<protein>
    <recommendedName>
        <fullName>Protein MioC</fullName>
    </recommendedName>
</protein>
<dbReference type="EMBL" id="K00826">
    <property type="protein sequence ID" value="AAA24251.1"/>
    <property type="molecule type" value="Genomic_DNA"/>
</dbReference>
<dbReference type="EMBL" id="V00308">
    <property type="status" value="NOT_ANNOTATED_CDS"/>
    <property type="molecule type" value="Genomic_DNA"/>
</dbReference>
<dbReference type="EMBL" id="J01657">
    <property type="protein sequence ID" value="AAA24247.1"/>
    <property type="status" value="ALT_SEQ"/>
    <property type="molecule type" value="Genomic_DNA"/>
</dbReference>
<dbReference type="EMBL" id="L10328">
    <property type="protein sequence ID" value="AAA62094.1"/>
    <property type="molecule type" value="Genomic_DNA"/>
</dbReference>
<dbReference type="EMBL" id="U00096">
    <property type="protein sequence ID" value="AAC76765.1"/>
    <property type="molecule type" value="Genomic_DNA"/>
</dbReference>
<dbReference type="EMBL" id="AP009048">
    <property type="protein sequence ID" value="BAE77546.1"/>
    <property type="molecule type" value="Genomic_DNA"/>
</dbReference>
<dbReference type="EMBL" id="X01631">
    <property type="protein sequence ID" value="CAA25772.1"/>
    <property type="molecule type" value="Genomic_DNA"/>
</dbReference>
<dbReference type="PIR" id="G65177">
    <property type="entry name" value="QQEC16"/>
</dbReference>
<dbReference type="RefSeq" id="NP_418198.1">
    <property type="nucleotide sequence ID" value="NC_000913.3"/>
</dbReference>
<dbReference type="RefSeq" id="WP_000763724.1">
    <property type="nucleotide sequence ID" value="NZ_SSZK01000036.1"/>
</dbReference>
<dbReference type="RefSeq" id="YP_006952151.1">
    <property type="nucleotide sequence ID" value="NC_019049.1"/>
</dbReference>
<dbReference type="PDB" id="2HNA">
    <property type="method" value="NMR"/>
    <property type="chains" value="A=1-147"/>
</dbReference>
<dbReference type="PDB" id="2HNB">
    <property type="method" value="NMR"/>
    <property type="chains" value="A=1-147"/>
</dbReference>
<dbReference type="PDBsum" id="2HNA"/>
<dbReference type="PDBsum" id="2HNB"/>
<dbReference type="SMR" id="P03817"/>
<dbReference type="BioGRID" id="4263259">
    <property type="interactions" value="228"/>
</dbReference>
<dbReference type="BioGRID" id="852551">
    <property type="interactions" value="4"/>
</dbReference>
<dbReference type="FunCoup" id="P03817">
    <property type="interactions" value="13"/>
</dbReference>
<dbReference type="IntAct" id="P03817">
    <property type="interactions" value="4"/>
</dbReference>
<dbReference type="STRING" id="511145.b3742"/>
<dbReference type="jPOST" id="P03817"/>
<dbReference type="PaxDb" id="511145-b3742"/>
<dbReference type="EnsemblBacteria" id="AAC76765">
    <property type="protein sequence ID" value="AAC76765"/>
    <property type="gene ID" value="b3742"/>
</dbReference>
<dbReference type="GeneID" id="948249"/>
<dbReference type="KEGG" id="ecj:JW3720"/>
<dbReference type="KEGG" id="eco:b3742"/>
<dbReference type="KEGG" id="ecoc:C3026_20275"/>
<dbReference type="PATRIC" id="fig|1411691.4.peg.2958"/>
<dbReference type="EchoBASE" id="EB1185"/>
<dbReference type="eggNOG" id="COG0716">
    <property type="taxonomic scope" value="Bacteria"/>
</dbReference>
<dbReference type="HOGENOM" id="CLU_051402_4_1_6"/>
<dbReference type="InParanoid" id="P03817"/>
<dbReference type="OMA" id="GFETTIH"/>
<dbReference type="OrthoDB" id="359268at2"/>
<dbReference type="PhylomeDB" id="P03817"/>
<dbReference type="BioCyc" id="EcoCyc:EG11199-MONOMER"/>
<dbReference type="EvolutionaryTrace" id="P03817"/>
<dbReference type="PRO" id="PR:P03817"/>
<dbReference type="Proteomes" id="UP000000625">
    <property type="component" value="Chromosome"/>
</dbReference>
<dbReference type="GO" id="GO:0005829">
    <property type="term" value="C:cytosol"/>
    <property type="evidence" value="ECO:0000314"/>
    <property type="project" value="EcoCyc"/>
</dbReference>
<dbReference type="GO" id="GO:0010181">
    <property type="term" value="F:FMN binding"/>
    <property type="evidence" value="ECO:0000314"/>
    <property type="project" value="EcoCyc"/>
</dbReference>
<dbReference type="GO" id="GO:0051302">
    <property type="term" value="P:regulation of cell division"/>
    <property type="evidence" value="ECO:0000315"/>
    <property type="project" value="EcoCyc"/>
</dbReference>
<dbReference type="FunFam" id="3.40.50.360:FF:000026">
    <property type="entry name" value="Flavoprotein MioC"/>
    <property type="match status" value="1"/>
</dbReference>
<dbReference type="Gene3D" id="3.40.50.360">
    <property type="match status" value="1"/>
</dbReference>
<dbReference type="InterPro" id="IPR008254">
    <property type="entry name" value="Flavodoxin/NO_synth"/>
</dbReference>
<dbReference type="InterPro" id="IPR029039">
    <property type="entry name" value="Flavoprotein-like_sf"/>
</dbReference>
<dbReference type="NCBIfam" id="NF006531">
    <property type="entry name" value="PRK09004.1"/>
    <property type="match status" value="1"/>
</dbReference>
<dbReference type="PANTHER" id="PTHR19384:SF128">
    <property type="entry name" value="NADPH OXIDOREDUCTASE A"/>
    <property type="match status" value="1"/>
</dbReference>
<dbReference type="PANTHER" id="PTHR19384">
    <property type="entry name" value="NITRIC OXIDE SYNTHASE-RELATED"/>
    <property type="match status" value="1"/>
</dbReference>
<dbReference type="Pfam" id="PF00258">
    <property type="entry name" value="Flavodoxin_1"/>
    <property type="match status" value="1"/>
</dbReference>
<dbReference type="SUPFAM" id="SSF52218">
    <property type="entry name" value="Flavoproteins"/>
    <property type="match status" value="1"/>
</dbReference>
<dbReference type="PROSITE" id="PS50902">
    <property type="entry name" value="FLAVODOXIN_LIKE"/>
    <property type="match status" value="1"/>
</dbReference>
<feature type="initiator methionine" description="Removed" evidence="2 3">
    <location>
        <position position="1"/>
    </location>
</feature>
<feature type="chain" id="PRO_0000196572" description="Protein MioC">
    <location>
        <begin position="2"/>
        <end position="147"/>
    </location>
</feature>
<feature type="domain" description="Flavodoxin-like" evidence="1">
    <location>
        <begin position="4"/>
        <end position="143"/>
    </location>
</feature>
<feature type="sequence conflict" description="In Ref. 3; AAA24247." evidence="4" ref="3">
    <original>THGAGDIPDNLSPFYEALQEQKPDLSAVRFGAIGIGSREYDTFC</original>
    <variation>PTVPEIFRTTFLLSMKHCRNRSPIFLQSALAQSVLAVVNMTPFV</variation>
    <location>
        <begin position="56"/>
        <end position="99"/>
    </location>
</feature>
<feature type="strand" evidence="5">
    <location>
        <begin position="3"/>
        <end position="7"/>
    </location>
</feature>
<feature type="strand" evidence="6">
    <location>
        <begin position="11"/>
        <end position="13"/>
    </location>
</feature>
<feature type="helix" evidence="5">
    <location>
        <begin position="16"/>
        <end position="28"/>
    </location>
</feature>
<feature type="strand" evidence="5">
    <location>
        <begin position="33"/>
        <end position="36"/>
    </location>
</feature>
<feature type="helix" evidence="6">
    <location>
        <begin position="41"/>
        <end position="43"/>
    </location>
</feature>
<feature type="strand" evidence="5">
    <location>
        <begin position="46"/>
        <end position="53"/>
    </location>
</feature>
<feature type="turn" evidence="5">
    <location>
        <begin position="56"/>
        <end position="59"/>
    </location>
</feature>
<feature type="helix" evidence="5">
    <location>
        <begin position="67"/>
        <end position="76"/>
    </location>
</feature>
<feature type="strand" evidence="5">
    <location>
        <begin position="82"/>
        <end position="89"/>
    </location>
</feature>
<feature type="helix" evidence="5">
    <location>
        <begin position="92"/>
        <end position="95"/>
    </location>
</feature>
<feature type="strand" evidence="5">
    <location>
        <begin position="98"/>
        <end position="100"/>
    </location>
</feature>
<feature type="helix" evidence="5">
    <location>
        <begin position="104"/>
        <end position="112"/>
    </location>
</feature>
<feature type="strand" evidence="6">
    <location>
        <begin position="121"/>
        <end position="124"/>
    </location>
</feature>
<feature type="strand" evidence="6">
    <location>
        <begin position="126"/>
        <end position="130"/>
    </location>
</feature>
<feature type="helix" evidence="5">
    <location>
        <begin position="136"/>
        <end position="146"/>
    </location>
</feature>
<evidence type="ECO:0000255" key="1">
    <source>
        <dbReference type="PROSITE-ProRule" id="PRU00088"/>
    </source>
</evidence>
<evidence type="ECO:0000269" key="2">
    <source>
    </source>
</evidence>
<evidence type="ECO:0000269" key="3">
    <source ref="9"/>
</evidence>
<evidence type="ECO:0000305" key="4"/>
<evidence type="ECO:0007829" key="5">
    <source>
        <dbReference type="PDB" id="2HNA"/>
    </source>
</evidence>
<evidence type="ECO:0007829" key="6">
    <source>
        <dbReference type="PDB" id="2HNB"/>
    </source>
</evidence>
<proteinExistence type="evidence at protein level"/>
<sequence length="147" mass="15808">MADITLISGSTLGGAEYVAEHLAEKLEEAGFTTETLHGPLLEDLPASGIWLVISSTHGAGDIPDNLSPFYEALQEQKPDLSAVRFGAIGIGSREYDTFCGAIDKLEAELKNSGAKQTGETLKINILDHDIPEDPAEEWLGSWVNLLK</sequence>
<reference key="1">
    <citation type="journal article" date="1983" name="Gene">
        <title>The replication origin region of Escherichia coli: nucleotide sequence and functional units.</title>
        <authorList>
            <person name="Buhk H.-J."/>
            <person name="Messer W."/>
        </authorList>
    </citation>
    <scope>NUCLEOTIDE SEQUENCE [GENOMIC DNA]</scope>
</reference>
<reference key="2">
    <citation type="journal article" date="1979" name="Proc. Natl. Acad. Sci. U.S.A.">
        <title>Nucleotide sequence of the origin of replication of the Escherichia coli K-12 chromosome.</title>
        <authorList>
            <person name="Meijer M."/>
            <person name="Beck E."/>
            <person name="Hansen F.G."/>
            <person name="Bergmans H.E.N."/>
            <person name="Messer W."/>
            <person name="Meyenburg K."/>
            <person name="Schaller H."/>
        </authorList>
    </citation>
    <scope>NUCLEOTIDE SEQUENCE [GENOMIC DNA]</scope>
    <source>
        <strain>K12</strain>
    </source>
</reference>
<reference key="3">
    <citation type="journal article" date="1981" name="Prog. Nucleic Acid Res. Mol. Biol.">
        <title>The DNA replication origin (ori) of Escherichia coli: structure and function of the ori-containing DNA fragment.</title>
        <authorList>
            <person name="Hirota Y."/>
            <person name="Yamada M."/>
            <person name="Nishimura A."/>
            <person name="Oka A."/>
            <person name="Sugimoto K."/>
            <person name="Asada K."/>
            <person name="Takanami M."/>
        </authorList>
    </citation>
    <scope>NUCLEOTIDE SEQUENCE [GENOMIC DNA]</scope>
</reference>
<reference key="4">
    <citation type="journal article" date="1993" name="Genomics">
        <title>DNA sequence and analysis of 136 kilobases of the Escherichia coli genome: organizational symmetry around the origin of replication.</title>
        <authorList>
            <person name="Burland V.D."/>
            <person name="Plunkett G. III"/>
            <person name="Daniels D.L."/>
            <person name="Blattner F.R."/>
        </authorList>
    </citation>
    <scope>NUCLEOTIDE SEQUENCE [LARGE SCALE GENOMIC DNA]</scope>
    <source>
        <strain>K12 / MG1655 / ATCC 47076</strain>
    </source>
</reference>
<reference key="5">
    <citation type="journal article" date="1997" name="Science">
        <title>The complete genome sequence of Escherichia coli K-12.</title>
        <authorList>
            <person name="Blattner F.R."/>
            <person name="Plunkett G. III"/>
            <person name="Bloch C.A."/>
            <person name="Perna N.T."/>
            <person name="Burland V."/>
            <person name="Riley M."/>
            <person name="Collado-Vides J."/>
            <person name="Glasner J.D."/>
            <person name="Rode C.K."/>
            <person name="Mayhew G.F."/>
            <person name="Gregor J."/>
            <person name="Davis N.W."/>
            <person name="Kirkpatrick H.A."/>
            <person name="Goeden M.A."/>
            <person name="Rose D.J."/>
            <person name="Mau B."/>
            <person name="Shao Y."/>
        </authorList>
    </citation>
    <scope>NUCLEOTIDE SEQUENCE [LARGE SCALE GENOMIC DNA]</scope>
    <source>
        <strain>K12 / MG1655 / ATCC 47076</strain>
    </source>
</reference>
<reference key="6">
    <citation type="journal article" date="2006" name="Mol. Syst. Biol.">
        <title>Highly accurate genome sequences of Escherichia coli K-12 strains MG1655 and W3110.</title>
        <authorList>
            <person name="Hayashi K."/>
            <person name="Morooka N."/>
            <person name="Yamamoto Y."/>
            <person name="Fujita K."/>
            <person name="Isono K."/>
            <person name="Choi S."/>
            <person name="Ohtsubo E."/>
            <person name="Baba T."/>
            <person name="Wanner B.L."/>
            <person name="Mori H."/>
            <person name="Horiuchi T."/>
        </authorList>
    </citation>
    <scope>NUCLEOTIDE SEQUENCE [LARGE SCALE GENOMIC DNA]</scope>
    <source>
        <strain>K12 / W3110 / ATCC 27325 / DSM 5911</strain>
    </source>
</reference>
<reference key="7">
    <citation type="journal article" date="1979" name="Proc. Natl. Acad. Sci. U.S.A.">
        <title>Nucleotide sequence of Escherichia coli K-12 replication origin.</title>
        <authorList>
            <person name="Sugimoto K."/>
            <person name="Oka A."/>
            <person name="Sugisaki H."/>
            <person name="Takanami M."/>
            <person name="Nishimura A."/>
            <person name="Yasuda Y."/>
            <person name="Hirota Y."/>
        </authorList>
    </citation>
    <scope>NUCLEOTIDE SEQUENCE [GENOMIC DNA] OF 100-147</scope>
    <source>
        <strain>K12</strain>
    </source>
</reference>
<reference key="8">
    <citation type="journal article" date="1984" name="Biochem. J.">
        <title>DNA sequence around the Escherichia coli unc operon. Completion of the sequence of a 17 kilobase segment containing asnA, oriC, unc, glmS and phoS.</title>
        <authorList>
            <person name="Walker J.E."/>
            <person name="Gay N.J."/>
            <person name="Saraste M."/>
            <person name="Eberle A.N."/>
        </authorList>
    </citation>
    <scope>NUCLEOTIDE SEQUENCE [GENOMIC DNA] OF 140-147</scope>
</reference>
<reference key="9">
    <citation type="submission" date="1996-02" db="UniProtKB">
        <authorList>
            <person name="Frutiger S."/>
            <person name="Hughes G.J."/>
            <person name="Pasquali C."/>
            <person name="Hochstrasser D.F."/>
        </authorList>
    </citation>
    <scope>PROTEIN SEQUENCE OF 2-13</scope>
    <source>
        <strain>K12 / W3110 / ATCC 27325 / DSM 5911</strain>
    </source>
</reference>
<reference key="10">
    <citation type="journal article" date="1992" name="Nucleic Acids Res.">
        <title>Different effects of mioC transcription on initiation of chromosomal and minichromosomal replication in Escherichia coli.</title>
        <authorList>
            <person name="Lobner-Olesen A."/>
            <person name="Boye E."/>
        </authorList>
    </citation>
    <scope>MUTAGENESIS</scope>
    <source>
        <strain>K12</strain>
    </source>
</reference>
<reference key="11">
    <citation type="journal article" date="2000" name="J. Biol. Chem.">
        <title>MioC is an FMN-binding protein that is essential for Escherichia coli biotin synthase activity in vitro.</title>
        <authorList>
            <person name="Birch O.M."/>
            <person name="Hewitson K.S."/>
            <person name="Fuhrmann M."/>
            <person name="Burgdorf K."/>
            <person name="Baldwin J.E."/>
            <person name="Roach P.L."/>
            <person name="Shaw N.M."/>
        </authorList>
    </citation>
    <scope>PROTEIN SEQUENCE OF 2-11</scope>
    <scope>CHARACTERIZATION</scope>
</reference>